<proteinExistence type="inferred from homology"/>
<accession>C1CHE6</accession>
<protein>
    <recommendedName>
        <fullName evidence="1">Arginine deiminase</fullName>
        <shortName evidence="1">ADI</shortName>
        <ecNumber evidence="1">3.5.3.6</ecNumber>
    </recommendedName>
    <alternativeName>
        <fullName evidence="1">Arginine dihydrolase</fullName>
        <shortName evidence="1">AD</shortName>
    </alternativeName>
</protein>
<keyword id="KW-0056">Arginine metabolism</keyword>
<keyword id="KW-0963">Cytoplasm</keyword>
<keyword id="KW-0378">Hydrolase</keyword>
<feature type="chain" id="PRO_1000125326" description="Arginine deiminase">
    <location>
        <begin position="1"/>
        <end position="409"/>
    </location>
</feature>
<feature type="active site" description="Amidino-cysteine intermediate" evidence="1">
    <location>
        <position position="399"/>
    </location>
</feature>
<gene>
    <name evidence="1" type="primary">arcA</name>
    <name type="ordered locus">SPJ_2173</name>
</gene>
<sequence length="409" mass="46653">MSSHPIQVFSEIGKLKKVMLHRPGKELENLLPDYLERLLFDDIPFLEDAQKEHDAFAQALRDEGIEVLYLEQLAAESLTSPEIRDQFIEEYLDEANIRDRQTKVAIRELLHGIKDNQELVEKTMAGIQKVELPEIPDEAKDLTDLVESDYPFAIDPMPNLYFTRDPFATIGNAVSLNHMFADTRNRETLYGKYIFKYHPIYGGKVDLVYNREEDTRIEGGDELVLSKDVLAVGISQRTDAASIEKLLVNIFKKNVGFKKVLAFEFANNRKFMHLDTVFTMVDYDKFTIHPEIEGDLHVYSVTYENEKLKIVEEKGDLAELLAQNLGVEKVHLIRCGGGNIVAAAREQWNDGSNTLTIAPGVVVVYDRNTVTNKILEEYGLRLIKIRGSELVRGRGGPRCMSMPFEREEV</sequence>
<dbReference type="EC" id="3.5.3.6" evidence="1"/>
<dbReference type="EMBL" id="CP000919">
    <property type="protein sequence ID" value="ACO19444.1"/>
    <property type="molecule type" value="Genomic_DNA"/>
</dbReference>
<dbReference type="RefSeq" id="WP_000094616.1">
    <property type="nucleotide sequence ID" value="NC_012466.1"/>
</dbReference>
<dbReference type="SMR" id="C1CHE6"/>
<dbReference type="GeneID" id="45652626"/>
<dbReference type="KEGG" id="sjj:SPJ_2173"/>
<dbReference type="HOGENOM" id="CLU_052662_0_1_9"/>
<dbReference type="UniPathway" id="UPA00254">
    <property type="reaction ID" value="UER00364"/>
</dbReference>
<dbReference type="Proteomes" id="UP000002206">
    <property type="component" value="Chromosome"/>
</dbReference>
<dbReference type="GO" id="GO:0005737">
    <property type="term" value="C:cytoplasm"/>
    <property type="evidence" value="ECO:0007669"/>
    <property type="project" value="UniProtKB-SubCell"/>
</dbReference>
<dbReference type="GO" id="GO:0016990">
    <property type="term" value="F:arginine deiminase activity"/>
    <property type="evidence" value="ECO:0007669"/>
    <property type="project" value="UniProtKB-UniRule"/>
</dbReference>
<dbReference type="GO" id="GO:0019547">
    <property type="term" value="P:arginine catabolic process to ornithine"/>
    <property type="evidence" value="ECO:0007669"/>
    <property type="project" value="UniProtKB-UniRule"/>
</dbReference>
<dbReference type="GO" id="GO:0019546">
    <property type="term" value="P:arginine deiminase pathway"/>
    <property type="evidence" value="ECO:0007669"/>
    <property type="project" value="TreeGrafter"/>
</dbReference>
<dbReference type="FunFam" id="1.10.3930.10:FF:000003">
    <property type="entry name" value="Arginine deiminase"/>
    <property type="match status" value="1"/>
</dbReference>
<dbReference type="Gene3D" id="1.10.3930.10">
    <property type="entry name" value="Arginine deiminase"/>
    <property type="match status" value="1"/>
</dbReference>
<dbReference type="Gene3D" id="3.75.10.10">
    <property type="entry name" value="L-arginine/glycine Amidinotransferase, Chain A"/>
    <property type="match status" value="1"/>
</dbReference>
<dbReference type="HAMAP" id="MF_00242">
    <property type="entry name" value="Arg_deiminase"/>
    <property type="match status" value="1"/>
</dbReference>
<dbReference type="InterPro" id="IPR003876">
    <property type="entry name" value="Arg_deiminase"/>
</dbReference>
<dbReference type="NCBIfam" id="TIGR01078">
    <property type="entry name" value="arcA"/>
    <property type="match status" value="1"/>
</dbReference>
<dbReference type="NCBIfam" id="NF002381">
    <property type="entry name" value="PRK01388.1"/>
    <property type="match status" value="1"/>
</dbReference>
<dbReference type="PANTHER" id="PTHR47271">
    <property type="entry name" value="ARGININE DEIMINASE"/>
    <property type="match status" value="1"/>
</dbReference>
<dbReference type="PANTHER" id="PTHR47271:SF2">
    <property type="entry name" value="ARGININE DEIMINASE"/>
    <property type="match status" value="1"/>
</dbReference>
<dbReference type="Pfam" id="PF02274">
    <property type="entry name" value="ADI"/>
    <property type="match status" value="1"/>
</dbReference>
<dbReference type="PIRSF" id="PIRSF006356">
    <property type="entry name" value="Arg_deiminase"/>
    <property type="match status" value="1"/>
</dbReference>
<dbReference type="PRINTS" id="PR01466">
    <property type="entry name" value="ARGDEIMINASE"/>
</dbReference>
<dbReference type="SUPFAM" id="SSF55909">
    <property type="entry name" value="Pentein"/>
    <property type="match status" value="1"/>
</dbReference>
<comment type="catalytic activity">
    <reaction evidence="1">
        <text>L-arginine + H2O = L-citrulline + NH4(+)</text>
        <dbReference type="Rhea" id="RHEA:19597"/>
        <dbReference type="ChEBI" id="CHEBI:15377"/>
        <dbReference type="ChEBI" id="CHEBI:28938"/>
        <dbReference type="ChEBI" id="CHEBI:32682"/>
        <dbReference type="ChEBI" id="CHEBI:57743"/>
        <dbReference type="EC" id="3.5.3.6"/>
    </reaction>
</comment>
<comment type="pathway">
    <text evidence="1">Amino-acid degradation; L-arginine degradation via ADI pathway; carbamoyl phosphate from L-arginine: step 1/2.</text>
</comment>
<comment type="subcellular location">
    <subcellularLocation>
        <location evidence="1">Cytoplasm</location>
    </subcellularLocation>
</comment>
<comment type="similarity">
    <text evidence="1">Belongs to the arginine deiminase family.</text>
</comment>
<reference key="1">
    <citation type="journal article" date="2010" name="Genome Biol.">
        <title>Structure and dynamics of the pan-genome of Streptococcus pneumoniae and closely related species.</title>
        <authorList>
            <person name="Donati C."/>
            <person name="Hiller N.L."/>
            <person name="Tettelin H."/>
            <person name="Muzzi A."/>
            <person name="Croucher N.J."/>
            <person name="Angiuoli S.V."/>
            <person name="Oggioni M."/>
            <person name="Dunning Hotopp J.C."/>
            <person name="Hu F.Z."/>
            <person name="Riley D.R."/>
            <person name="Covacci A."/>
            <person name="Mitchell T.J."/>
            <person name="Bentley S.D."/>
            <person name="Kilian M."/>
            <person name="Ehrlich G.D."/>
            <person name="Rappuoli R."/>
            <person name="Moxon E.R."/>
            <person name="Masignani V."/>
        </authorList>
    </citation>
    <scope>NUCLEOTIDE SEQUENCE [LARGE SCALE GENOMIC DNA]</scope>
    <source>
        <strain>JJA</strain>
    </source>
</reference>
<organism>
    <name type="scientific">Streptococcus pneumoniae (strain JJA)</name>
    <dbReference type="NCBI Taxonomy" id="488222"/>
    <lineage>
        <taxon>Bacteria</taxon>
        <taxon>Bacillati</taxon>
        <taxon>Bacillota</taxon>
        <taxon>Bacilli</taxon>
        <taxon>Lactobacillales</taxon>
        <taxon>Streptococcaceae</taxon>
        <taxon>Streptococcus</taxon>
    </lineage>
</organism>
<name>ARCA_STRZJ</name>
<evidence type="ECO:0000255" key="1">
    <source>
        <dbReference type="HAMAP-Rule" id="MF_00242"/>
    </source>
</evidence>